<gene>
    <name evidence="1" type="primary">nanT</name>
    <name type="ordered locus">SCH_3276</name>
</gene>
<evidence type="ECO:0000255" key="1">
    <source>
        <dbReference type="HAMAP-Rule" id="MF_01238"/>
    </source>
</evidence>
<protein>
    <recommendedName>
        <fullName evidence="1">Sialic acid transporter NanT</fullName>
    </recommendedName>
    <alternativeName>
        <fullName evidence="1">Sialic acid permease</fullName>
    </alternativeName>
    <alternativeName>
        <fullName evidence="1">Sialic acid/H(+) symporter</fullName>
    </alternativeName>
</protein>
<keyword id="KW-0997">Cell inner membrane</keyword>
<keyword id="KW-1003">Cell membrane</keyword>
<keyword id="KW-0472">Membrane</keyword>
<keyword id="KW-0762">Sugar transport</keyword>
<keyword id="KW-0812">Transmembrane</keyword>
<keyword id="KW-1133">Transmembrane helix</keyword>
<keyword id="KW-0813">Transport</keyword>
<organism>
    <name type="scientific">Salmonella choleraesuis (strain SC-B67)</name>
    <dbReference type="NCBI Taxonomy" id="321314"/>
    <lineage>
        <taxon>Bacteria</taxon>
        <taxon>Pseudomonadati</taxon>
        <taxon>Pseudomonadota</taxon>
        <taxon>Gammaproteobacteria</taxon>
        <taxon>Enterobacterales</taxon>
        <taxon>Enterobacteriaceae</taxon>
        <taxon>Salmonella</taxon>
    </lineage>
</organism>
<proteinExistence type="inferred from homology"/>
<feature type="chain" id="PRO_1000214057" description="Sialic acid transporter NanT">
    <location>
        <begin position="1"/>
        <end position="496"/>
    </location>
</feature>
<feature type="transmembrane region" description="Helical" evidence="1">
    <location>
        <begin position="22"/>
        <end position="42"/>
    </location>
</feature>
<feature type="transmembrane region" description="Helical" evidence="1">
    <location>
        <begin position="58"/>
        <end position="78"/>
    </location>
</feature>
<feature type="transmembrane region" description="Helical" evidence="1">
    <location>
        <begin position="86"/>
        <end position="106"/>
    </location>
</feature>
<feature type="transmembrane region" description="Helical" evidence="1">
    <location>
        <begin position="116"/>
        <end position="136"/>
    </location>
</feature>
<feature type="transmembrane region" description="Helical" evidence="1">
    <location>
        <begin position="148"/>
        <end position="168"/>
    </location>
</feature>
<feature type="transmembrane region" description="Helical" evidence="1">
    <location>
        <begin position="170"/>
        <end position="190"/>
    </location>
</feature>
<feature type="transmembrane region" description="Helical" evidence="1">
    <location>
        <begin position="224"/>
        <end position="244"/>
    </location>
</feature>
<feature type="transmembrane region" description="Helical" evidence="1">
    <location>
        <begin position="247"/>
        <end position="267"/>
    </location>
</feature>
<feature type="transmembrane region" description="Helical" evidence="1">
    <location>
        <begin position="278"/>
        <end position="298"/>
    </location>
</feature>
<feature type="transmembrane region" description="Helical" evidence="1">
    <location>
        <begin position="313"/>
        <end position="333"/>
    </location>
</feature>
<feature type="transmembrane region" description="Helical" evidence="1">
    <location>
        <begin position="353"/>
        <end position="373"/>
    </location>
</feature>
<feature type="transmembrane region" description="Helical" evidence="1">
    <location>
        <begin position="378"/>
        <end position="398"/>
    </location>
</feature>
<feature type="transmembrane region" description="Helical" evidence="1">
    <location>
        <begin position="406"/>
        <end position="426"/>
    </location>
</feature>
<feature type="transmembrane region" description="Helical" evidence="1">
    <location>
        <begin position="431"/>
        <end position="451"/>
    </location>
</feature>
<dbReference type="EMBL" id="AE017220">
    <property type="protein sequence ID" value="AAX67182.1"/>
    <property type="molecule type" value="Genomic_DNA"/>
</dbReference>
<dbReference type="RefSeq" id="WP_000108073.1">
    <property type="nucleotide sequence ID" value="NC_006905.1"/>
</dbReference>
<dbReference type="SMR" id="Q57JD0"/>
<dbReference type="KEGG" id="sec:SCH_3276"/>
<dbReference type="HOGENOM" id="CLU_001265_46_8_6"/>
<dbReference type="Proteomes" id="UP000000538">
    <property type="component" value="Chromosome"/>
</dbReference>
<dbReference type="GO" id="GO:0005886">
    <property type="term" value="C:plasma membrane"/>
    <property type="evidence" value="ECO:0007669"/>
    <property type="project" value="UniProtKB-SubCell"/>
</dbReference>
<dbReference type="GO" id="GO:0046943">
    <property type="term" value="F:carboxylic acid transmembrane transporter activity"/>
    <property type="evidence" value="ECO:0007669"/>
    <property type="project" value="TreeGrafter"/>
</dbReference>
<dbReference type="GO" id="GO:0015538">
    <property type="term" value="F:sialic acid:proton symporter activity"/>
    <property type="evidence" value="ECO:0007669"/>
    <property type="project" value="UniProtKB-UniRule"/>
</dbReference>
<dbReference type="CDD" id="cd17316">
    <property type="entry name" value="MFS_SV2_like"/>
    <property type="match status" value="1"/>
</dbReference>
<dbReference type="FunFam" id="1.20.1250.20:FF:000027">
    <property type="entry name" value="Sialic acid transporter NanT"/>
    <property type="match status" value="1"/>
</dbReference>
<dbReference type="FunFam" id="1.20.1250.20:FF:000038">
    <property type="entry name" value="Sialic acid transporter NanT"/>
    <property type="match status" value="1"/>
</dbReference>
<dbReference type="Gene3D" id="1.20.1250.20">
    <property type="entry name" value="MFS general substrate transporter like domains"/>
    <property type="match status" value="2"/>
</dbReference>
<dbReference type="HAMAP" id="MF_01238">
    <property type="entry name" value="MFS_NanT"/>
    <property type="match status" value="1"/>
</dbReference>
<dbReference type="InterPro" id="IPR011701">
    <property type="entry name" value="MFS"/>
</dbReference>
<dbReference type="InterPro" id="IPR020846">
    <property type="entry name" value="MFS_dom"/>
</dbReference>
<dbReference type="InterPro" id="IPR036259">
    <property type="entry name" value="MFS_trans_sf"/>
</dbReference>
<dbReference type="InterPro" id="IPR004742">
    <property type="entry name" value="SA_transporter"/>
</dbReference>
<dbReference type="NCBIfam" id="TIGR00891">
    <property type="entry name" value="2A0112"/>
    <property type="match status" value="1"/>
</dbReference>
<dbReference type="NCBIfam" id="NF003024">
    <property type="entry name" value="PRK03893.1"/>
    <property type="match status" value="1"/>
</dbReference>
<dbReference type="PANTHER" id="PTHR23508">
    <property type="entry name" value="CARBOXYLIC ACID TRANSPORTER PROTEIN HOMOLOG"/>
    <property type="match status" value="1"/>
</dbReference>
<dbReference type="PANTHER" id="PTHR23508:SF3">
    <property type="entry name" value="SIALIC ACID TRANSPORTER NANT"/>
    <property type="match status" value="1"/>
</dbReference>
<dbReference type="Pfam" id="PF07690">
    <property type="entry name" value="MFS_1"/>
    <property type="match status" value="1"/>
</dbReference>
<dbReference type="SUPFAM" id="SSF103473">
    <property type="entry name" value="MFS general substrate transporter"/>
    <property type="match status" value="1"/>
</dbReference>
<dbReference type="PROSITE" id="PS50850">
    <property type="entry name" value="MFS"/>
    <property type="match status" value="1"/>
</dbReference>
<comment type="function">
    <text evidence="1">Catalyzes the proton-dependent transport of sialic acid.</text>
</comment>
<comment type="catalytic activity">
    <reaction evidence="1">
        <text>N-acetylneuraminate(in) + H(+)(in) = N-acetylneuraminate(out) + H(+)(out)</text>
        <dbReference type="Rhea" id="RHEA:28987"/>
        <dbReference type="ChEBI" id="CHEBI:15378"/>
        <dbReference type="ChEBI" id="CHEBI:35418"/>
    </reaction>
</comment>
<comment type="subcellular location">
    <subcellularLocation>
        <location evidence="1">Cell inner membrane</location>
        <topology evidence="1">Multi-pass membrane protein</topology>
    </subcellularLocation>
</comment>
<comment type="similarity">
    <text evidence="1">Belongs to the major facilitator superfamily. Sialate:H(+) symporter (SHS) (TC 2.A.1.12) family.</text>
</comment>
<accession>Q57JD0</accession>
<name>NANT_SALCH</name>
<reference key="1">
    <citation type="journal article" date="2005" name="Nucleic Acids Res.">
        <title>The genome sequence of Salmonella enterica serovar Choleraesuis, a highly invasive and resistant zoonotic pathogen.</title>
        <authorList>
            <person name="Chiu C.-H."/>
            <person name="Tang P."/>
            <person name="Chu C."/>
            <person name="Hu S."/>
            <person name="Bao Q."/>
            <person name="Yu J."/>
            <person name="Chou Y.-Y."/>
            <person name="Wang H.-S."/>
            <person name="Lee Y.-S."/>
        </authorList>
    </citation>
    <scope>NUCLEOTIDE SEQUENCE [LARGE SCALE GENOMIC DNA]</scope>
    <source>
        <strain>SC-B67</strain>
    </source>
</reference>
<sequence length="496" mass="53613">MSTSTQNIPWYRHLNRAQWRAFSAAWLGYLLDGFDFVLIALVLTEVQSEFGLTTVQAASLISAAFISRWFGGLLLGAMGDRYGRRLAMVSSIILFSVGTLACGFAPGYTTMFIARLVIGMGMAGEYGSSATYVIESWPKHLRNKASGFLISGFSVGAVVAAQVYSLVVPVWGWRALFFIGILPIIFALWLRKNIPEAEDWKEKHAGKAPVRTMVDILYRGEHRIINILMTFVAAAALWFCFAGNLQNAAIVAGLGLLCAVIFISFMVQSSGKRWPTGVMLMLVVLFAFLYSWPIQALLPTYLKTELAYDPHTVANVLFFSGFGAAVGCCVGGFLGDWLGTRKAYVCSLLASQILIIPVFAIGGTNVWVLGLLLFFQQMLGQGIAGILPKLIGGYFDTAQRAAGLGFTYNVGALGGALAPILGALIAQRLDLGTALASLSFSLTFVVILLIGLDMPSRVQRWLRPEALRTHDAIDDKPFSGAVPLGSGKGAFVKTKS</sequence>